<name>PTN14_HUMAN</name>
<gene>
    <name type="primary">PTPN14</name>
    <name type="synonym">PEZ</name>
    <name type="synonym">PTPD2</name>
</gene>
<sequence length="1187" mass="135261">MPFGLKLRRTRRYNVLSKNCFVTRIRLLDSNVIECTLSVESTGQECLEAVAQRLELRETHYFGLWFLSKSQQARWVELEKPLKKHLDKFANEPLLFFGVMFYVPNVSWLQQEATRYQYYLQVKKDVLEGRLRCTLDQVIRLAGLAVQADFGDYNQFDSQDFLREYVLFPMDLALEEAVLEELTQKVAQEHKAHSGILPAEAELMYINEVERLDGFGQEIFPVKDNHGNCVHLGIFFMGIFVRNRIGRQAVIYRWNDMGNITHNKSTILVELINKEETALFHTDDIENAKYISRLFATRHKFYKQNKICTEQSNSPPPIRRQPTWSRSSLPRQQPYILPPVHVQCGEHYSETHTSQDSIFHGNEEALYCNSHNSLDLNYLNGTVTNGSVCSVHSVNSLNCSQSFIQASPVSSNLSIPGSDIMRADYIPSHRHSAIIVPSYRPTPDYETVMRQMKRGILHTDSQSQSLRNLNIINTHAYNQPEDLVYSQPEMRERHPYTVPYGPQGVYSNKLVSPSDQRNPKNNVVPSKPGASAISHTVSTPELANMQLQGSHNYSTAHMLKNYLFRPPPPYPRPRPATSTPDLASHRHKYVSGSSPDLVTRKVQLSVKTFQEDSSPVVHQSLQEVSEPLTATKHHGTVNKRHSLEVMNSMVRGMEAMTLKSLHLPMARRNTLREQGPPEEGSGSHEVPQLPQYHHKKTFSDATMLIHSSESEEEEEEAPESVPQIPMLREKMEYSAQLQAALARIPNKPPPEYPGPRKSVSNGALRQDQASLPPAMARARVLRHGPAKAISMSRTDPPAVNGASLGPSISEPDLTSVKERVKKEPVKERPVSEMFSLEDSIIEREMMIRNLEKQKMAGLEAQKRPLMLAALNGLSVARVSGREENRVDATRVPMDERFRTLKKKLEEGMVFTEYEQIPKKKANGIFSTAALPENAERSRIREVVPYEENRVELIPTKENNTGYINASHIKVVVGGAEWHYIATQGPLPHTCHDFWQMVWEQGVNVIAMVTAEEEGGRTKSHRYWPKLGSKHSSATYGKFKVTTKFRTDSVCYATTGLKVKHLLSGQERTVWHLQYTDWPDHGCPEDVQGFLSYLEEIQSVRRHTNSMLEGTKNRHPPIVVHCSAGVGRTGVLILSELMIYCLEHNEKVEVPMMLRLLREQRMFMIQTIAQYKFVYQVLIQFLQNSRLI</sequence>
<comment type="function">
    <text evidence="7 8 10 11 12 13 14">Protein tyrosine phosphatase which may play a role in the regulation of lymphangiogenesis, cell-cell adhesion, cell-matrix adhesion, cell migration, cell growth and also regulates TGF-beta gene expression, thereby modulating epithelial-mesenchymal transition. Mediates beta-catenin dephosphorylation at adhesion junctions. Acts as a negative regulator of the oncogenic property of YAP, a downstream target of the hippo pathway, in a cell density-dependent manner. May function as a tumor suppressor.</text>
</comment>
<comment type="catalytic activity">
    <reaction evidence="5">
        <text>O-phospho-L-tyrosyl-[protein] + H2O = L-tyrosyl-[protein] + phosphate</text>
        <dbReference type="Rhea" id="RHEA:10684"/>
        <dbReference type="Rhea" id="RHEA-COMP:10136"/>
        <dbReference type="Rhea" id="RHEA-COMP:20101"/>
        <dbReference type="ChEBI" id="CHEBI:15377"/>
        <dbReference type="ChEBI" id="CHEBI:43474"/>
        <dbReference type="ChEBI" id="CHEBI:46858"/>
        <dbReference type="ChEBI" id="CHEBI:61978"/>
        <dbReference type="EC" id="3.1.3.48"/>
    </reaction>
</comment>
<comment type="subunit">
    <text evidence="11 13 14">Interacts with FLT4; the interaction is enhanced by stimulation with VEGFC. Interacts (via PPxY motifs) with YAP1 (via WW domains); this interaction leads to the cytoplasmic sequestration of YAP1 and inhibits its transcriptional co-activator activity.</text>
</comment>
<comment type="interaction">
    <interactant intactId="EBI-1237156">
        <id>Q15678</id>
    </interactant>
    <interactant intactId="EBI-17286414">
        <id>A2BDD9</id>
        <label>AMOT</label>
    </interactant>
    <organismsDiffer>false</organismsDiffer>
    <experiments>3</experiments>
</comment>
<comment type="interaction">
    <interactant intactId="EBI-1237156">
        <id>Q15678</id>
    </interactant>
    <interactant intactId="EBI-742327">
        <id>Q15654</id>
        <label>TRIP6</label>
    </interactant>
    <organismsDiffer>false</organismsDiffer>
    <experiments>3</experiments>
</comment>
<comment type="interaction">
    <interactant intactId="EBI-1237156">
        <id>Q15678</id>
    </interactant>
    <interactant intactId="EBI-1044059">
        <id>P46937</id>
        <label>YAP1</label>
    </interactant>
    <organismsDiffer>false</organismsDiffer>
    <experiments>8</experiments>
</comment>
<comment type="subcellular location">
    <subcellularLocation>
        <location>Cytoplasm</location>
    </subcellularLocation>
    <subcellularLocation>
        <location evidence="1">Cytoplasm</location>
        <location evidence="1">Cytoskeleton</location>
    </subcellularLocation>
    <subcellularLocation>
        <location>Nucleus</location>
    </subcellularLocation>
    <text>Translocation into the nucleus is associated with induction of cell proliferation. Partially colocalized with actin filaments at the plasma membrane.</text>
</comment>
<comment type="tissue specificity">
    <text>Ubiquitous.</text>
</comment>
<comment type="induction">
    <text evidence="14">Up-regulated at protein level by cell density. However, at the mRNA level remains the same regardless of the status of cell density.</text>
</comment>
<comment type="PTM">
    <text evidence="14">Ubiquitinated by the ECS (Elongin BC-CUL2/5-SOCS-box protein)/LRR1 E3 ligase complex and subsequently targeted to proteasomal degradation.</text>
</comment>
<comment type="disease" evidence="11">
    <disease id="DI-03023">
        <name>Choanal atresia and lymphedema</name>
        <acronym>CATLPH</acronym>
        <description>A disease characterized by posterior choanal atresia and lymphedema. Additional features are a high-arched palate, hypoplastic nipples, and mild pectus excavatum.</description>
        <dbReference type="MIM" id="613611"/>
    </disease>
    <text>The disease is caused by variants affecting the gene represented in this entry. A homozygous deletion in PTPN14 predicted to result in frameshift and premature truncation, has been shown to be the cause of choanal atresia and lymphedema in one family.</text>
</comment>
<comment type="disease">
    <text evidence="12">Influence clinical severity of hereditary haemorragic telagiectasia (HHT).</text>
</comment>
<comment type="similarity">
    <text evidence="15">Belongs to the protein-tyrosine phosphatase family. Non-receptor class subfamily.</text>
</comment>
<comment type="online information" name="Atlas of Genetics and Cytogenetics in Oncology and Haematology">
    <link uri="https://atlasgeneticsoncology.org/gene/41913/PTPN14"/>
</comment>
<keyword id="KW-0002">3D-structure</keyword>
<keyword id="KW-0963">Cytoplasm</keyword>
<keyword id="KW-0206">Cytoskeleton</keyword>
<keyword id="KW-0378">Hydrolase</keyword>
<keyword id="KW-0539">Nucleus</keyword>
<keyword id="KW-0597">Phosphoprotein</keyword>
<keyword id="KW-0904">Protein phosphatase</keyword>
<keyword id="KW-1267">Proteomics identification</keyword>
<keyword id="KW-1185">Reference proteome</keyword>
<keyword id="KW-0804">Transcription</keyword>
<keyword id="KW-0805">Transcription regulation</keyword>
<keyword id="KW-0832">Ubl conjugation</keyword>
<proteinExistence type="evidence at protein level"/>
<evidence type="ECO:0000250" key="1"/>
<evidence type="ECO:0000250" key="2">
    <source>
        <dbReference type="UniProtKB" id="Q62130"/>
    </source>
</evidence>
<evidence type="ECO:0000255" key="3">
    <source>
        <dbReference type="PROSITE-ProRule" id="PRU00084"/>
    </source>
</evidence>
<evidence type="ECO:0000255" key="4">
    <source>
        <dbReference type="PROSITE-ProRule" id="PRU00160"/>
    </source>
</evidence>
<evidence type="ECO:0000255" key="5">
    <source>
        <dbReference type="PROSITE-ProRule" id="PRU10044"/>
    </source>
</evidence>
<evidence type="ECO:0000256" key="6">
    <source>
        <dbReference type="SAM" id="MobiDB-lite"/>
    </source>
</evidence>
<evidence type="ECO:0000269" key="7">
    <source>
    </source>
</evidence>
<evidence type="ECO:0000269" key="8">
    <source>
    </source>
</evidence>
<evidence type="ECO:0000269" key="9">
    <source>
    </source>
</evidence>
<evidence type="ECO:0000269" key="10">
    <source>
    </source>
</evidence>
<evidence type="ECO:0000269" key="11">
    <source>
    </source>
</evidence>
<evidence type="ECO:0000269" key="12">
    <source>
    </source>
</evidence>
<evidence type="ECO:0000269" key="13">
    <source>
    </source>
</evidence>
<evidence type="ECO:0000269" key="14">
    <source>
    </source>
</evidence>
<evidence type="ECO:0000305" key="15"/>
<evidence type="ECO:0007744" key="16">
    <source>
    </source>
</evidence>
<evidence type="ECO:0007744" key="17">
    <source>
    </source>
</evidence>
<evidence type="ECO:0007744" key="18">
    <source>
    </source>
</evidence>
<evidence type="ECO:0007829" key="19">
    <source>
        <dbReference type="PDB" id="2BZL"/>
    </source>
</evidence>
<evidence type="ECO:0007829" key="20">
    <source>
        <dbReference type="PDB" id="6IWD"/>
    </source>
</evidence>
<evidence type="ECO:0007829" key="21">
    <source>
        <dbReference type="PDB" id="6JJW"/>
    </source>
</evidence>
<reference key="1">
    <citation type="journal article" date="1995" name="Biochem. Biophys. Res. Commun.">
        <title>Pez: a novel human cDNA encoding protein tyrosine phosphatase- and ezrin-like domains.</title>
        <authorList>
            <person name="Smith A.L."/>
            <person name="Mitchell P.J."/>
            <person name="Shipley J."/>
            <person name="Gusterson B.A."/>
            <person name="Rogers M.V."/>
            <person name="Crompton M.R."/>
        </authorList>
    </citation>
    <scope>NUCLEOTIDE SEQUENCE [MRNA]</scope>
    <source>
        <tissue>Mammary carcinoma</tissue>
    </source>
</reference>
<reference key="2">
    <citation type="journal article" date="2006" name="Nature">
        <title>The DNA sequence and biological annotation of human chromosome 1.</title>
        <authorList>
            <person name="Gregory S.G."/>
            <person name="Barlow K.F."/>
            <person name="McLay K.E."/>
            <person name="Kaul R."/>
            <person name="Swarbreck D."/>
            <person name="Dunham A."/>
            <person name="Scott C.E."/>
            <person name="Howe K.L."/>
            <person name="Woodfine K."/>
            <person name="Spencer C.C.A."/>
            <person name="Jones M.C."/>
            <person name="Gillson C."/>
            <person name="Searle S."/>
            <person name="Zhou Y."/>
            <person name="Kokocinski F."/>
            <person name="McDonald L."/>
            <person name="Evans R."/>
            <person name="Phillips K."/>
            <person name="Atkinson A."/>
            <person name="Cooper R."/>
            <person name="Jones C."/>
            <person name="Hall R.E."/>
            <person name="Andrews T.D."/>
            <person name="Lloyd C."/>
            <person name="Ainscough R."/>
            <person name="Almeida J.P."/>
            <person name="Ambrose K.D."/>
            <person name="Anderson F."/>
            <person name="Andrew R.W."/>
            <person name="Ashwell R.I.S."/>
            <person name="Aubin K."/>
            <person name="Babbage A.K."/>
            <person name="Bagguley C.L."/>
            <person name="Bailey J."/>
            <person name="Beasley H."/>
            <person name="Bethel G."/>
            <person name="Bird C.P."/>
            <person name="Bray-Allen S."/>
            <person name="Brown J.Y."/>
            <person name="Brown A.J."/>
            <person name="Buckley D."/>
            <person name="Burton J."/>
            <person name="Bye J."/>
            <person name="Carder C."/>
            <person name="Chapman J.C."/>
            <person name="Clark S.Y."/>
            <person name="Clarke G."/>
            <person name="Clee C."/>
            <person name="Cobley V."/>
            <person name="Collier R.E."/>
            <person name="Corby N."/>
            <person name="Coville G.J."/>
            <person name="Davies J."/>
            <person name="Deadman R."/>
            <person name="Dunn M."/>
            <person name="Earthrowl M."/>
            <person name="Ellington A.G."/>
            <person name="Errington H."/>
            <person name="Frankish A."/>
            <person name="Frankland J."/>
            <person name="French L."/>
            <person name="Garner P."/>
            <person name="Garnett J."/>
            <person name="Gay L."/>
            <person name="Ghori M.R.J."/>
            <person name="Gibson R."/>
            <person name="Gilby L.M."/>
            <person name="Gillett W."/>
            <person name="Glithero R.J."/>
            <person name="Grafham D.V."/>
            <person name="Griffiths C."/>
            <person name="Griffiths-Jones S."/>
            <person name="Grocock R."/>
            <person name="Hammond S."/>
            <person name="Harrison E.S.I."/>
            <person name="Hart E."/>
            <person name="Haugen E."/>
            <person name="Heath P.D."/>
            <person name="Holmes S."/>
            <person name="Holt K."/>
            <person name="Howden P.J."/>
            <person name="Hunt A.R."/>
            <person name="Hunt S.E."/>
            <person name="Hunter G."/>
            <person name="Isherwood J."/>
            <person name="James R."/>
            <person name="Johnson C."/>
            <person name="Johnson D."/>
            <person name="Joy A."/>
            <person name="Kay M."/>
            <person name="Kershaw J.K."/>
            <person name="Kibukawa M."/>
            <person name="Kimberley A.M."/>
            <person name="King A."/>
            <person name="Knights A.J."/>
            <person name="Lad H."/>
            <person name="Laird G."/>
            <person name="Lawlor S."/>
            <person name="Leongamornlert D.A."/>
            <person name="Lloyd D.M."/>
            <person name="Loveland J."/>
            <person name="Lovell J."/>
            <person name="Lush M.J."/>
            <person name="Lyne R."/>
            <person name="Martin S."/>
            <person name="Mashreghi-Mohammadi M."/>
            <person name="Matthews L."/>
            <person name="Matthews N.S.W."/>
            <person name="McLaren S."/>
            <person name="Milne S."/>
            <person name="Mistry S."/>
            <person name="Moore M.J.F."/>
            <person name="Nickerson T."/>
            <person name="O'Dell C.N."/>
            <person name="Oliver K."/>
            <person name="Palmeiri A."/>
            <person name="Palmer S.A."/>
            <person name="Parker A."/>
            <person name="Patel D."/>
            <person name="Pearce A.V."/>
            <person name="Peck A.I."/>
            <person name="Pelan S."/>
            <person name="Phelps K."/>
            <person name="Phillimore B.J."/>
            <person name="Plumb R."/>
            <person name="Rajan J."/>
            <person name="Raymond C."/>
            <person name="Rouse G."/>
            <person name="Saenphimmachak C."/>
            <person name="Sehra H.K."/>
            <person name="Sheridan E."/>
            <person name="Shownkeen R."/>
            <person name="Sims S."/>
            <person name="Skuce C.D."/>
            <person name="Smith M."/>
            <person name="Steward C."/>
            <person name="Subramanian S."/>
            <person name="Sycamore N."/>
            <person name="Tracey A."/>
            <person name="Tromans A."/>
            <person name="Van Helmond Z."/>
            <person name="Wall M."/>
            <person name="Wallis J.M."/>
            <person name="White S."/>
            <person name="Whitehead S.L."/>
            <person name="Wilkinson J.E."/>
            <person name="Willey D.L."/>
            <person name="Williams H."/>
            <person name="Wilming L."/>
            <person name="Wray P.W."/>
            <person name="Wu Z."/>
            <person name="Coulson A."/>
            <person name="Vaudin M."/>
            <person name="Sulston J.E."/>
            <person name="Durbin R.M."/>
            <person name="Hubbard T."/>
            <person name="Wooster R."/>
            <person name="Dunham I."/>
            <person name="Carter N.P."/>
            <person name="McVean G."/>
            <person name="Ross M.T."/>
            <person name="Harrow J."/>
            <person name="Olson M.V."/>
            <person name="Beck S."/>
            <person name="Rogers J."/>
            <person name="Bentley D.R."/>
        </authorList>
    </citation>
    <scope>NUCLEOTIDE SEQUENCE [LARGE SCALE GENOMIC DNA]</scope>
</reference>
<reference key="3">
    <citation type="submission" date="2005-09" db="EMBL/GenBank/DDBJ databases">
        <authorList>
            <person name="Mural R.J."/>
            <person name="Istrail S."/>
            <person name="Sutton G.G."/>
            <person name="Florea L."/>
            <person name="Halpern A.L."/>
            <person name="Mobarry C.M."/>
            <person name="Lippert R."/>
            <person name="Walenz B."/>
            <person name="Shatkay H."/>
            <person name="Dew I."/>
            <person name="Miller J.R."/>
            <person name="Flanigan M.J."/>
            <person name="Edwards N.J."/>
            <person name="Bolanos R."/>
            <person name="Fasulo D."/>
            <person name="Halldorsson B.V."/>
            <person name="Hannenhalli S."/>
            <person name="Turner R."/>
            <person name="Yooseph S."/>
            <person name="Lu F."/>
            <person name="Nusskern D.R."/>
            <person name="Shue B.C."/>
            <person name="Zheng X.H."/>
            <person name="Zhong F."/>
            <person name="Delcher A.L."/>
            <person name="Huson D.H."/>
            <person name="Kravitz S.A."/>
            <person name="Mouchard L."/>
            <person name="Reinert K."/>
            <person name="Remington K.A."/>
            <person name="Clark A.G."/>
            <person name="Waterman M.S."/>
            <person name="Eichler E.E."/>
            <person name="Adams M.D."/>
            <person name="Hunkapiller M.W."/>
            <person name="Myers E.W."/>
            <person name="Venter J.C."/>
        </authorList>
    </citation>
    <scope>NUCLEOTIDE SEQUENCE [LARGE SCALE GENOMIC DNA]</scope>
</reference>
<reference key="4">
    <citation type="journal article" date="2004" name="Genome Res.">
        <title>The status, quality, and expansion of the NIH full-length cDNA project: the Mammalian Gene Collection (MGC).</title>
        <authorList>
            <consortium name="The MGC Project Team"/>
        </authorList>
    </citation>
    <scope>NUCLEOTIDE SEQUENCE [LARGE SCALE MRNA]</scope>
    <source>
        <tissue>Heart</tissue>
        <tissue>Lung</tissue>
    </source>
</reference>
<reference key="5">
    <citation type="journal article" date="2000" name="J. Cell Sci.">
        <title>Translocation of protein tyrosine phosphatase Pez/PTPD2/PTP36 to the nucleus is associated with induction of cell proliferation.</title>
        <authorList>
            <person name="Wadham C."/>
            <person name="Gamble J.R."/>
            <person name="Vadas M.A."/>
            <person name="Khew-Goodall Y."/>
        </authorList>
    </citation>
    <scope>SUBCELLULAR LOCATION</scope>
    <scope>FUNCTION</scope>
</reference>
<reference key="6">
    <citation type="journal article" date="2003" name="Mol. Biol. Cell">
        <title>The protein tyrosine phosphatase Pez is a major phosphatase of adherens junctions and dephosphorylates beta-catenin.</title>
        <authorList>
            <person name="Wadham C."/>
            <person name="Gamble J.R."/>
            <person name="Vadas M.A."/>
            <person name="Khew-Goodall Y."/>
        </authorList>
    </citation>
    <scope>FUNCTION</scope>
</reference>
<reference key="7">
    <citation type="journal article" date="2007" name="J. Cell Biol.">
        <title>The protein tyrosine phosphatase Pez regulates TGFbeta, epithelial-mesenchymal transition, and organ development.</title>
        <authorList>
            <person name="Wyatt L."/>
            <person name="Wadham C."/>
            <person name="Crocker L.A."/>
            <person name="Lardelli M."/>
            <person name="Khew-Goodall Y."/>
        </authorList>
    </citation>
    <scope>FUNCTION</scope>
</reference>
<reference key="8">
    <citation type="journal article" date="2007" name="Science">
        <title>ATM and ATR substrate analysis reveals extensive protein networks responsive to DNA damage.</title>
        <authorList>
            <person name="Matsuoka S."/>
            <person name="Ballif B.A."/>
            <person name="Smogorzewska A."/>
            <person name="McDonald E.R. III"/>
            <person name="Hurov K.E."/>
            <person name="Luo J."/>
            <person name="Bakalarski C.E."/>
            <person name="Zhao Z."/>
            <person name="Solimini N."/>
            <person name="Lerenthal Y."/>
            <person name="Shiloh Y."/>
            <person name="Gygi S.P."/>
            <person name="Elledge S.J."/>
        </authorList>
    </citation>
    <scope>PHOSPHORYLATION [LARGE SCALE ANALYSIS] AT SER-486</scope>
    <scope>IDENTIFICATION BY MASS SPECTROMETRY [LARGE SCALE ANALYSIS]</scope>
    <source>
        <tissue>Embryonic kidney</tissue>
    </source>
</reference>
<reference key="9">
    <citation type="journal article" date="2009" name="Anal. Chem.">
        <title>Lys-N and trypsin cover complementary parts of the phosphoproteome in a refined SCX-based approach.</title>
        <authorList>
            <person name="Gauci S."/>
            <person name="Helbig A.O."/>
            <person name="Slijper M."/>
            <person name="Krijgsveld J."/>
            <person name="Heck A.J."/>
            <person name="Mohammed S."/>
        </authorList>
    </citation>
    <scope>IDENTIFICATION BY MASS SPECTROMETRY [LARGE SCALE ANALYSIS]</scope>
</reference>
<reference key="10">
    <citation type="journal article" date="2009" name="Mol. Cell. Proteomics">
        <title>Large-scale proteomics analysis of the human kinome.</title>
        <authorList>
            <person name="Oppermann F.S."/>
            <person name="Gnad F."/>
            <person name="Olsen J.V."/>
            <person name="Hornberger R."/>
            <person name="Greff Z."/>
            <person name="Keri G."/>
            <person name="Mann M."/>
            <person name="Daub H."/>
        </authorList>
    </citation>
    <scope>IDENTIFICATION BY MASS SPECTROMETRY [LARGE SCALE ANALYSIS]</scope>
</reference>
<reference key="11">
    <citation type="journal article" date="2010" name="Am. J. Hum. Genet.">
        <title>Protein tyrosine phosphatase PTPN14 is a regulator of lymphatic function and choanal development in humans.</title>
        <authorList>
            <person name="Au A.C."/>
            <person name="Hernandez P.A."/>
            <person name="Lieber E."/>
            <person name="Nadroo A.M."/>
            <person name="Shen Y.M."/>
            <person name="Kelley K.A."/>
            <person name="Gelb B.D."/>
            <person name="Diaz G.A."/>
        </authorList>
    </citation>
    <scope>FUNCTION</scope>
    <scope>INTERACTION WITH FLT4</scope>
    <scope>INVOLVEMENT IN CATLPH</scope>
</reference>
<reference key="12">
    <citation type="journal article" date="2011" name="Sci. Signal.">
        <title>System-wide temporal characterization of the proteome and phosphoproteome of human embryonic stem cell differentiation.</title>
        <authorList>
            <person name="Rigbolt K.T."/>
            <person name="Prokhorova T.A."/>
            <person name="Akimov V."/>
            <person name="Henningsen J."/>
            <person name="Johansen P.T."/>
            <person name="Kratchmarova I."/>
            <person name="Kassem M."/>
            <person name="Mann M."/>
            <person name="Olsen J.V."/>
            <person name="Blagoev B."/>
        </authorList>
    </citation>
    <scope>PHOSPHORYLATION [LARGE SCALE ANALYSIS] AT SER-591; SER-594 AND SER-642</scope>
    <scope>IDENTIFICATION BY MASS SPECTROMETRY [LARGE SCALE ANALYSIS]</scope>
</reference>
<reference key="13">
    <citation type="journal article" date="2012" name="Genes Dev.">
        <title>PTPN14 is required for the density-dependent control of YAP1.</title>
        <authorList>
            <person name="Wang W."/>
            <person name="Huang J."/>
            <person name="Wang X."/>
            <person name="Yuan J."/>
            <person name="Li X."/>
            <person name="Feng L."/>
            <person name="Park J.I."/>
            <person name="Chen J."/>
        </authorList>
    </citation>
    <scope>SUBCELLULAR LOCATION</scope>
    <scope>INDUCTION</scope>
    <scope>FUNCTION</scope>
    <scope>INTERACTION WITH YAP1; CUL2 AND LRR1</scope>
    <scope>UBIQUITINATION</scope>
</reference>
<reference key="14">
    <citation type="journal article" date="2012" name="Nat. Commun.">
        <title>Mouse and human strategies identify PTPN14 as a modifier of angiogenesis and hereditary haemorrhagic telangiectasia.</title>
        <authorList>
            <person name="Benzinou M."/>
            <person name="Clermont F.F."/>
            <person name="Letteboer T.G."/>
            <person name="Kim J.H."/>
            <person name="Espejel S."/>
            <person name="Harradine K.A."/>
            <person name="Arbelaez J."/>
            <person name="Luu M.T."/>
            <person name="Roy R."/>
            <person name="Quigley D."/>
            <person name="Higgins M.N."/>
            <person name="Zaid M."/>
            <person name="Aouizerat B.E."/>
            <person name="van Amstel J.K."/>
            <person name="Giraud S."/>
            <person name="Dupuis-Girod S."/>
            <person name="Lesca G."/>
            <person name="Plauchu H."/>
            <person name="Hughes C.C."/>
            <person name="Westermann C.J."/>
            <person name="Akhurst R.J."/>
        </authorList>
    </citation>
    <scope>INVOLVEMENT IN HTT</scope>
    <scope>FUNCTION</scope>
</reference>
<reference key="15">
    <citation type="journal article" date="2013" name="J. Proteome Res.">
        <title>Toward a comprehensive characterization of a human cancer cell phosphoproteome.</title>
        <authorList>
            <person name="Zhou H."/>
            <person name="Di Palma S."/>
            <person name="Preisinger C."/>
            <person name="Peng M."/>
            <person name="Polat A.N."/>
            <person name="Heck A.J."/>
            <person name="Mohammed S."/>
        </authorList>
    </citation>
    <scope>PHOSPHORYLATION [LARGE SCALE ANALYSIS] AT SER-594</scope>
    <scope>IDENTIFICATION BY MASS SPECTROMETRY [LARGE SCALE ANALYSIS]</scope>
    <source>
        <tissue>Cervix carcinoma</tissue>
    </source>
</reference>
<reference key="16">
    <citation type="journal article" date="2013" name="Oncogene">
        <title>PTPN14 interacts with and negatively regulates the oncogenic function of YAP.</title>
        <authorList>
            <person name="Liu X."/>
            <person name="Yang N."/>
            <person name="Figel S.A."/>
            <person name="Wilson K.E."/>
            <person name="Morrison C.D."/>
            <person name="Gelman I.H."/>
            <person name="Zhang J."/>
        </authorList>
    </citation>
    <scope>INTERACTION WITH YAP1</scope>
    <scope>FUNCTION</scope>
    <scope>IDENTIFICATION BY MASS SPECTROMETRY</scope>
</reference>
<reference key="17">
    <citation type="journal article" date="2006" name="Proteins">
        <title>Crystal structure of human protein tyrosine phosphatase 14 (PTPN14) at 1.65-A resolution.</title>
        <authorList>
            <person name="Barr A.J."/>
            <person name="Debreczeni J.E."/>
            <person name="Eswaran J."/>
            <person name="Knapp S."/>
        </authorList>
    </citation>
    <scope>X-RAY CRYSTALLOGRAPHY (1.65 ANGSTROMS) OF 886-1187</scope>
</reference>
<reference key="18">
    <citation type="journal article" date="2006" name="Science">
        <title>The consensus coding sequences of human breast and colorectal cancers.</title>
        <authorList>
            <person name="Sjoeblom T."/>
            <person name="Jones S."/>
            <person name="Wood L.D."/>
            <person name="Parsons D.W."/>
            <person name="Lin J."/>
            <person name="Barber T.D."/>
            <person name="Mandelker D."/>
            <person name="Leary R.J."/>
            <person name="Ptak J."/>
            <person name="Silliman N."/>
            <person name="Szabo S."/>
            <person name="Buckhaults P."/>
            <person name="Farrell C."/>
            <person name="Meeh P."/>
            <person name="Markowitz S.D."/>
            <person name="Willis J."/>
            <person name="Dawson D."/>
            <person name="Willson J.K.V."/>
            <person name="Gazdar A.F."/>
            <person name="Hartigan J."/>
            <person name="Wu L."/>
            <person name="Liu C."/>
            <person name="Parmigiani G."/>
            <person name="Park B.H."/>
            <person name="Bachman K.E."/>
            <person name="Papadopoulos N."/>
            <person name="Vogelstein B."/>
            <person name="Kinzler K.W."/>
            <person name="Velculescu V.E."/>
        </authorList>
    </citation>
    <scope>VARIANTS [LARGE SCALE ANALYSIS] GLU-159 AND PRO-360</scope>
</reference>
<dbReference type="EC" id="3.1.3.48"/>
<dbReference type="EMBL" id="X82676">
    <property type="protein sequence ID" value="CAA57993.1"/>
    <property type="molecule type" value="mRNA"/>
</dbReference>
<dbReference type="EMBL" id="AL929236">
    <property type="status" value="NOT_ANNOTATED_CDS"/>
    <property type="molecule type" value="Genomic_DNA"/>
</dbReference>
<dbReference type="EMBL" id="AL603838">
    <property type="status" value="NOT_ANNOTATED_CDS"/>
    <property type="molecule type" value="Genomic_DNA"/>
</dbReference>
<dbReference type="EMBL" id="AL445305">
    <property type="status" value="NOT_ANNOTATED_CDS"/>
    <property type="molecule type" value="Genomic_DNA"/>
</dbReference>
<dbReference type="EMBL" id="AL592216">
    <property type="status" value="NOT_ANNOTATED_CDS"/>
    <property type="molecule type" value="Genomic_DNA"/>
</dbReference>
<dbReference type="EMBL" id="CH471100">
    <property type="protein sequence ID" value="EAW93351.1"/>
    <property type="molecule type" value="Genomic_DNA"/>
</dbReference>
<dbReference type="EMBL" id="BC101754">
    <property type="protein sequence ID" value="AAI01755.1"/>
    <property type="molecule type" value="mRNA"/>
</dbReference>
<dbReference type="EMBL" id="BC104803">
    <property type="protein sequence ID" value="AAI04804.1"/>
    <property type="molecule type" value="mRNA"/>
</dbReference>
<dbReference type="CCDS" id="CCDS1514.1"/>
<dbReference type="PIR" id="JC4155">
    <property type="entry name" value="JC4155"/>
</dbReference>
<dbReference type="RefSeq" id="NP_005392.2">
    <property type="nucleotide sequence ID" value="NM_005401.4"/>
</dbReference>
<dbReference type="RefSeq" id="XP_016857430.1">
    <property type="nucleotide sequence ID" value="XM_017001941.2"/>
</dbReference>
<dbReference type="RefSeq" id="XP_024304527.1">
    <property type="nucleotide sequence ID" value="XM_024448759.2"/>
</dbReference>
<dbReference type="RefSeq" id="XP_047282323.1">
    <property type="nucleotide sequence ID" value="XM_047426367.1"/>
</dbReference>
<dbReference type="RefSeq" id="XP_047282326.1">
    <property type="nucleotide sequence ID" value="XM_047426370.1"/>
</dbReference>
<dbReference type="RefSeq" id="XP_047282330.1">
    <property type="nucleotide sequence ID" value="XM_047426374.1"/>
</dbReference>
<dbReference type="RefSeq" id="XP_054193914.1">
    <property type="nucleotide sequence ID" value="XM_054337939.1"/>
</dbReference>
<dbReference type="RefSeq" id="XP_054193915.1">
    <property type="nucleotide sequence ID" value="XM_054337940.1"/>
</dbReference>
<dbReference type="RefSeq" id="XP_054193916.1">
    <property type="nucleotide sequence ID" value="XM_054337941.1"/>
</dbReference>
<dbReference type="RefSeq" id="XP_054193917.1">
    <property type="nucleotide sequence ID" value="XM_054337942.1"/>
</dbReference>
<dbReference type="RefSeq" id="XP_054193918.1">
    <property type="nucleotide sequence ID" value="XM_054337943.1"/>
</dbReference>
<dbReference type="PDB" id="2BZL">
    <property type="method" value="X-ray"/>
    <property type="resolution" value="1.65 A"/>
    <property type="chains" value="A=886-1187"/>
</dbReference>
<dbReference type="PDB" id="6IWD">
    <property type="method" value="X-ray"/>
    <property type="resolution" value="1.80 A"/>
    <property type="chains" value="A=886-1187"/>
</dbReference>
<dbReference type="PDB" id="6JJW">
    <property type="method" value="X-ray"/>
    <property type="resolution" value="2.40 A"/>
    <property type="chains" value="U=428-455"/>
</dbReference>
<dbReference type="PDBsum" id="2BZL"/>
<dbReference type="PDBsum" id="6IWD"/>
<dbReference type="PDBsum" id="6JJW"/>
<dbReference type="SMR" id="Q15678"/>
<dbReference type="BioGRID" id="111748">
    <property type="interactions" value="176"/>
</dbReference>
<dbReference type="DIP" id="DIP-38131N"/>
<dbReference type="FunCoup" id="Q15678">
    <property type="interactions" value="2663"/>
</dbReference>
<dbReference type="IntAct" id="Q15678">
    <property type="interactions" value="48"/>
</dbReference>
<dbReference type="MINT" id="Q15678"/>
<dbReference type="STRING" id="9606.ENSP00000355923"/>
<dbReference type="BindingDB" id="Q15678"/>
<dbReference type="ChEMBL" id="CHEMBL3317332"/>
<dbReference type="DEPOD" id="PTPN14"/>
<dbReference type="iPTMnet" id="Q15678"/>
<dbReference type="PhosphoSitePlus" id="Q15678"/>
<dbReference type="BioMuta" id="PTPN14"/>
<dbReference type="DMDM" id="209572662"/>
<dbReference type="jPOST" id="Q15678"/>
<dbReference type="MassIVE" id="Q15678"/>
<dbReference type="PaxDb" id="9606-ENSP00000355923"/>
<dbReference type="PeptideAtlas" id="Q15678"/>
<dbReference type="ProteomicsDB" id="60701"/>
<dbReference type="Pumba" id="Q15678"/>
<dbReference type="Antibodypedia" id="34618">
    <property type="antibodies" value="160 antibodies from 27 providers"/>
</dbReference>
<dbReference type="DNASU" id="5784"/>
<dbReference type="Ensembl" id="ENST00000366956.10">
    <property type="protein sequence ID" value="ENSP00000355923.4"/>
    <property type="gene ID" value="ENSG00000152104.12"/>
</dbReference>
<dbReference type="GeneID" id="5784"/>
<dbReference type="KEGG" id="hsa:5784"/>
<dbReference type="MANE-Select" id="ENST00000366956.10">
    <property type="protein sequence ID" value="ENSP00000355923.4"/>
    <property type="RefSeq nucleotide sequence ID" value="NM_005401.5"/>
    <property type="RefSeq protein sequence ID" value="NP_005392.2"/>
</dbReference>
<dbReference type="UCSC" id="uc001hkk.3">
    <property type="organism name" value="human"/>
</dbReference>
<dbReference type="AGR" id="HGNC:9647"/>
<dbReference type="CTD" id="5784"/>
<dbReference type="DisGeNET" id="5784"/>
<dbReference type="GeneCards" id="PTPN14"/>
<dbReference type="HGNC" id="HGNC:9647">
    <property type="gene designation" value="PTPN14"/>
</dbReference>
<dbReference type="HPA" id="ENSG00000152104">
    <property type="expression patterns" value="Low tissue specificity"/>
</dbReference>
<dbReference type="MalaCards" id="PTPN14"/>
<dbReference type="MIM" id="603155">
    <property type="type" value="gene"/>
</dbReference>
<dbReference type="MIM" id="613611">
    <property type="type" value="phenotype"/>
</dbReference>
<dbReference type="neXtProt" id="NX_Q15678"/>
<dbReference type="OpenTargets" id="ENSG00000152104"/>
<dbReference type="Orphanet" id="99141">
    <property type="disease" value="Lymphedema-posterior choanal atresia syndrome"/>
</dbReference>
<dbReference type="PharmGKB" id="PA33989"/>
<dbReference type="VEuPathDB" id="HostDB:ENSG00000152104"/>
<dbReference type="eggNOG" id="KOG0792">
    <property type="taxonomic scope" value="Eukaryota"/>
</dbReference>
<dbReference type="GeneTree" id="ENSGT00940000156874"/>
<dbReference type="HOGENOM" id="CLU_006456_1_0_1"/>
<dbReference type="InParanoid" id="Q15678"/>
<dbReference type="OMA" id="FKKCRQY"/>
<dbReference type="OrthoDB" id="10012364at2759"/>
<dbReference type="PAN-GO" id="Q15678">
    <property type="GO annotations" value="3 GO annotations based on evolutionary models"/>
</dbReference>
<dbReference type="PhylomeDB" id="Q15678"/>
<dbReference type="TreeFam" id="TF315900"/>
<dbReference type="BRENDA" id="3.1.3.48">
    <property type="organism ID" value="2681"/>
</dbReference>
<dbReference type="PathwayCommons" id="Q15678"/>
<dbReference type="Reactome" id="R-HSA-9008059">
    <property type="pathway name" value="Interleukin-37 signaling"/>
</dbReference>
<dbReference type="SignaLink" id="Q15678"/>
<dbReference type="SIGNOR" id="Q15678"/>
<dbReference type="BioGRID-ORCS" id="5784">
    <property type="hits" value="34 hits in 1176 CRISPR screens"/>
</dbReference>
<dbReference type="ChiTaRS" id="PTPN14">
    <property type="organism name" value="human"/>
</dbReference>
<dbReference type="EvolutionaryTrace" id="Q15678"/>
<dbReference type="GeneWiki" id="PTPN14"/>
<dbReference type="GenomeRNAi" id="5784"/>
<dbReference type="Pharos" id="Q15678">
    <property type="development level" value="Tbio"/>
</dbReference>
<dbReference type="PRO" id="PR:Q15678"/>
<dbReference type="Proteomes" id="UP000005640">
    <property type="component" value="Chromosome 1"/>
</dbReference>
<dbReference type="RNAct" id="Q15678">
    <property type="molecule type" value="protein"/>
</dbReference>
<dbReference type="Bgee" id="ENSG00000152104">
    <property type="expression patterns" value="Expressed in buccal mucosa cell and 183 other cell types or tissues"/>
</dbReference>
<dbReference type="ExpressionAtlas" id="Q15678">
    <property type="expression patterns" value="baseline and differential"/>
</dbReference>
<dbReference type="GO" id="GO:0005737">
    <property type="term" value="C:cytoplasm"/>
    <property type="evidence" value="ECO:0000314"/>
    <property type="project" value="UniProtKB"/>
</dbReference>
<dbReference type="GO" id="GO:0005856">
    <property type="term" value="C:cytoskeleton"/>
    <property type="evidence" value="ECO:0007669"/>
    <property type="project" value="UniProtKB-SubCell"/>
</dbReference>
<dbReference type="GO" id="GO:0005654">
    <property type="term" value="C:nucleoplasm"/>
    <property type="evidence" value="ECO:0000314"/>
    <property type="project" value="HPA"/>
</dbReference>
<dbReference type="GO" id="GO:0005634">
    <property type="term" value="C:nucleus"/>
    <property type="evidence" value="ECO:0000314"/>
    <property type="project" value="UniProtKB"/>
</dbReference>
<dbReference type="GO" id="GO:0004725">
    <property type="term" value="F:protein tyrosine phosphatase activity"/>
    <property type="evidence" value="ECO:0000315"/>
    <property type="project" value="UniProtKB"/>
</dbReference>
<dbReference type="GO" id="GO:0030971">
    <property type="term" value="F:receptor tyrosine kinase binding"/>
    <property type="evidence" value="ECO:0000353"/>
    <property type="project" value="UniProtKB"/>
</dbReference>
<dbReference type="GO" id="GO:0003712">
    <property type="term" value="F:transcription coregulator activity"/>
    <property type="evidence" value="ECO:0000315"/>
    <property type="project" value="UniProtKB"/>
</dbReference>
<dbReference type="GO" id="GO:0001946">
    <property type="term" value="P:lymphangiogenesis"/>
    <property type="evidence" value="ECO:0000315"/>
    <property type="project" value="UniProtKB"/>
</dbReference>
<dbReference type="GO" id="GO:0008285">
    <property type="term" value="P:negative regulation of cell population proliferation"/>
    <property type="evidence" value="ECO:0000315"/>
    <property type="project" value="UniProtKB"/>
</dbReference>
<dbReference type="GO" id="GO:0006470">
    <property type="term" value="P:protein dephosphorylation"/>
    <property type="evidence" value="ECO:0000304"/>
    <property type="project" value="ProtInc"/>
</dbReference>
<dbReference type="GO" id="GO:0046825">
    <property type="term" value="P:regulation of protein export from nucleus"/>
    <property type="evidence" value="ECO:0000314"/>
    <property type="project" value="UniProtKB"/>
</dbReference>
<dbReference type="CDD" id="cd14473">
    <property type="entry name" value="FERM_B-lobe"/>
    <property type="match status" value="1"/>
</dbReference>
<dbReference type="CDD" id="cd13188">
    <property type="entry name" value="FERM_C_PTPN14_PTPN21"/>
    <property type="match status" value="1"/>
</dbReference>
<dbReference type="CDD" id="cd17191">
    <property type="entry name" value="FERM_F1_PTPN14"/>
    <property type="match status" value="1"/>
</dbReference>
<dbReference type="CDD" id="cd14599">
    <property type="entry name" value="PTPc-N14"/>
    <property type="match status" value="1"/>
</dbReference>
<dbReference type="FunFam" id="1.20.80.10:FF:000014">
    <property type="entry name" value="Tyrosine-protein phosphatase non-receptor type"/>
    <property type="match status" value="1"/>
</dbReference>
<dbReference type="FunFam" id="2.30.29.30:FF:000149">
    <property type="entry name" value="Tyrosine-protein phosphatase non-receptor type"/>
    <property type="match status" value="1"/>
</dbReference>
<dbReference type="FunFam" id="3.10.20.90:FF:000039">
    <property type="entry name" value="Tyrosine-protein phosphatase non-receptor type"/>
    <property type="match status" value="1"/>
</dbReference>
<dbReference type="FunFam" id="3.90.190.10:FF:000030">
    <property type="entry name" value="Tyrosine-protein phosphatase non-receptor type"/>
    <property type="match status" value="1"/>
</dbReference>
<dbReference type="Gene3D" id="1.20.80.10">
    <property type="match status" value="1"/>
</dbReference>
<dbReference type="Gene3D" id="3.10.20.90">
    <property type="entry name" value="Phosphatidylinositol 3-kinase Catalytic Subunit, Chain A, domain 1"/>
    <property type="match status" value="1"/>
</dbReference>
<dbReference type="Gene3D" id="2.30.29.30">
    <property type="entry name" value="Pleckstrin-homology domain (PH domain)/Phosphotyrosine-binding domain (PTB)"/>
    <property type="match status" value="1"/>
</dbReference>
<dbReference type="Gene3D" id="3.90.190.10">
    <property type="entry name" value="Protein tyrosine phosphatase superfamily"/>
    <property type="match status" value="1"/>
</dbReference>
<dbReference type="IDEAL" id="IID00476"/>
<dbReference type="InterPro" id="IPR019749">
    <property type="entry name" value="Band_41_domain"/>
</dbReference>
<dbReference type="InterPro" id="IPR014352">
    <property type="entry name" value="FERM/acyl-CoA-bd_prot_sf"/>
</dbReference>
<dbReference type="InterPro" id="IPR035963">
    <property type="entry name" value="FERM_2"/>
</dbReference>
<dbReference type="InterPro" id="IPR019748">
    <property type="entry name" value="FERM_central"/>
</dbReference>
<dbReference type="InterPro" id="IPR019747">
    <property type="entry name" value="FERM_CS"/>
</dbReference>
<dbReference type="InterPro" id="IPR000299">
    <property type="entry name" value="FERM_domain"/>
</dbReference>
<dbReference type="InterPro" id="IPR018979">
    <property type="entry name" value="FERM_N"/>
</dbReference>
<dbReference type="InterPro" id="IPR018980">
    <property type="entry name" value="FERM_PH-like_C"/>
</dbReference>
<dbReference type="InterPro" id="IPR011993">
    <property type="entry name" value="PH-like_dom_sf"/>
</dbReference>
<dbReference type="InterPro" id="IPR029021">
    <property type="entry name" value="Prot-tyrosine_phosphatase-like"/>
</dbReference>
<dbReference type="InterPro" id="IPR000242">
    <property type="entry name" value="PTP_cat"/>
</dbReference>
<dbReference type="InterPro" id="IPR014392">
    <property type="entry name" value="PTP_non-rcpt_14/21"/>
</dbReference>
<dbReference type="InterPro" id="IPR041782">
    <property type="entry name" value="PTPN14/21_FERM_C"/>
</dbReference>
<dbReference type="InterPro" id="IPR016130">
    <property type="entry name" value="Tyr_Pase_AS"/>
</dbReference>
<dbReference type="InterPro" id="IPR003595">
    <property type="entry name" value="Tyr_Pase_cat"/>
</dbReference>
<dbReference type="InterPro" id="IPR000387">
    <property type="entry name" value="Tyr_Pase_dom"/>
</dbReference>
<dbReference type="InterPro" id="IPR029071">
    <property type="entry name" value="Ubiquitin-like_domsf"/>
</dbReference>
<dbReference type="PANTHER" id="PTHR45706">
    <property type="entry name" value="TYROSINE-PROTEIN PHOSPHATASE"/>
    <property type="match status" value="1"/>
</dbReference>
<dbReference type="PANTHER" id="PTHR45706:SF6">
    <property type="entry name" value="TYROSINE-PROTEIN PHOSPHATASE NON-RECEPTOR TYPE 14"/>
    <property type="match status" value="1"/>
</dbReference>
<dbReference type="Pfam" id="PF09380">
    <property type="entry name" value="FERM_C"/>
    <property type="match status" value="1"/>
</dbReference>
<dbReference type="Pfam" id="PF00373">
    <property type="entry name" value="FERM_M"/>
    <property type="match status" value="1"/>
</dbReference>
<dbReference type="Pfam" id="PF09379">
    <property type="entry name" value="FERM_N"/>
    <property type="match status" value="1"/>
</dbReference>
<dbReference type="Pfam" id="PF00102">
    <property type="entry name" value="Y_phosphatase"/>
    <property type="match status" value="1"/>
</dbReference>
<dbReference type="PIRSF" id="PIRSF000934">
    <property type="entry name" value="Tyr-Ptase_nr14"/>
    <property type="match status" value="1"/>
</dbReference>
<dbReference type="PRINTS" id="PR00935">
    <property type="entry name" value="BAND41"/>
</dbReference>
<dbReference type="PRINTS" id="PR00700">
    <property type="entry name" value="PRTYPHPHTASE"/>
</dbReference>
<dbReference type="SMART" id="SM00295">
    <property type="entry name" value="B41"/>
    <property type="match status" value="1"/>
</dbReference>
<dbReference type="SMART" id="SM01196">
    <property type="entry name" value="FERM_C"/>
    <property type="match status" value="1"/>
</dbReference>
<dbReference type="SMART" id="SM00194">
    <property type="entry name" value="PTPc"/>
    <property type="match status" value="1"/>
</dbReference>
<dbReference type="SMART" id="SM00404">
    <property type="entry name" value="PTPc_motif"/>
    <property type="match status" value="1"/>
</dbReference>
<dbReference type="SUPFAM" id="SSF52799">
    <property type="entry name" value="(Phosphotyrosine protein) phosphatases II"/>
    <property type="match status" value="1"/>
</dbReference>
<dbReference type="SUPFAM" id="SSF50729">
    <property type="entry name" value="PH domain-like"/>
    <property type="match status" value="1"/>
</dbReference>
<dbReference type="SUPFAM" id="SSF47031">
    <property type="entry name" value="Second domain of FERM"/>
    <property type="match status" value="1"/>
</dbReference>
<dbReference type="SUPFAM" id="SSF54236">
    <property type="entry name" value="Ubiquitin-like"/>
    <property type="match status" value="1"/>
</dbReference>
<dbReference type="PROSITE" id="PS00660">
    <property type="entry name" value="FERM_1"/>
    <property type="match status" value="1"/>
</dbReference>
<dbReference type="PROSITE" id="PS00661">
    <property type="entry name" value="FERM_2"/>
    <property type="match status" value="1"/>
</dbReference>
<dbReference type="PROSITE" id="PS50057">
    <property type="entry name" value="FERM_3"/>
    <property type="match status" value="1"/>
</dbReference>
<dbReference type="PROSITE" id="PS00383">
    <property type="entry name" value="TYR_PHOSPHATASE_1"/>
    <property type="match status" value="1"/>
</dbReference>
<dbReference type="PROSITE" id="PS50056">
    <property type="entry name" value="TYR_PHOSPHATASE_2"/>
    <property type="match status" value="1"/>
</dbReference>
<dbReference type="PROSITE" id="PS50055">
    <property type="entry name" value="TYR_PHOSPHATASE_PTP"/>
    <property type="match status" value="1"/>
</dbReference>
<organism>
    <name type="scientific">Homo sapiens</name>
    <name type="common">Human</name>
    <dbReference type="NCBI Taxonomy" id="9606"/>
    <lineage>
        <taxon>Eukaryota</taxon>
        <taxon>Metazoa</taxon>
        <taxon>Chordata</taxon>
        <taxon>Craniata</taxon>
        <taxon>Vertebrata</taxon>
        <taxon>Euteleostomi</taxon>
        <taxon>Mammalia</taxon>
        <taxon>Eutheria</taxon>
        <taxon>Euarchontoglires</taxon>
        <taxon>Primates</taxon>
        <taxon>Haplorrhini</taxon>
        <taxon>Catarrhini</taxon>
        <taxon>Hominidae</taxon>
        <taxon>Homo</taxon>
    </lineage>
</organism>
<protein>
    <recommendedName>
        <fullName>Tyrosine-protein phosphatase non-receptor type 14</fullName>
        <ecNumber>3.1.3.48</ecNumber>
    </recommendedName>
    <alternativeName>
        <fullName>Protein-tyrosine phosphatase pez</fullName>
    </alternativeName>
</protein>
<accession>Q15678</accession>
<accession>Q5VSI0</accession>
<feature type="chain" id="PRO_0000219437" description="Tyrosine-protein phosphatase non-receptor type 14">
    <location>
        <begin position="1"/>
        <end position="1187"/>
    </location>
</feature>
<feature type="domain" description="FERM" evidence="3">
    <location>
        <begin position="21"/>
        <end position="306"/>
    </location>
</feature>
<feature type="domain" description="Tyrosine-protein phosphatase" evidence="4">
    <location>
        <begin position="909"/>
        <end position="1180"/>
    </location>
</feature>
<feature type="region of interest" description="Disordered" evidence="6">
    <location>
        <begin position="510"/>
        <end position="531"/>
    </location>
</feature>
<feature type="region of interest" description="Disordered" evidence="6">
    <location>
        <begin position="671"/>
        <end position="690"/>
    </location>
</feature>
<feature type="region of interest" description="Disordered" evidence="6">
    <location>
        <begin position="787"/>
        <end position="824"/>
    </location>
</feature>
<feature type="compositionally biased region" description="Polar residues" evidence="6">
    <location>
        <begin position="510"/>
        <end position="524"/>
    </location>
</feature>
<feature type="compositionally biased region" description="Basic and acidic residues" evidence="6">
    <location>
        <begin position="815"/>
        <end position="824"/>
    </location>
</feature>
<feature type="active site" description="Phosphocysteine intermediate" evidence="4 5">
    <location>
        <position position="1121"/>
    </location>
</feature>
<feature type="binding site" evidence="1">
    <location>
        <position position="1079"/>
    </location>
    <ligand>
        <name>substrate</name>
    </ligand>
</feature>
<feature type="binding site" evidence="1">
    <location>
        <begin position="1121"/>
        <end position="1127"/>
    </location>
    <ligand>
        <name>substrate</name>
    </ligand>
</feature>
<feature type="binding site" evidence="1">
    <location>
        <position position="1165"/>
    </location>
    <ligand>
        <name>substrate</name>
    </ligand>
</feature>
<feature type="modified residue" description="Phosphoserine" evidence="2">
    <location>
        <position position="314"/>
    </location>
</feature>
<feature type="modified residue" description="Phosphoserine" evidence="2">
    <location>
        <position position="461"/>
    </location>
</feature>
<feature type="modified residue" description="Phosphoserine" evidence="16">
    <location>
        <position position="486"/>
    </location>
</feature>
<feature type="modified residue" description="Phosphoserine" evidence="17">
    <location>
        <position position="591"/>
    </location>
</feature>
<feature type="modified residue" description="Phosphoserine" evidence="2">
    <location>
        <position position="593"/>
    </location>
</feature>
<feature type="modified residue" description="Phosphoserine" evidence="17 18">
    <location>
        <position position="594"/>
    </location>
</feature>
<feature type="modified residue" description="Phosphoserine" evidence="17">
    <location>
        <position position="642"/>
    </location>
</feature>
<feature type="modified residue" description="Phosphoserine" evidence="2">
    <location>
        <position position="831"/>
    </location>
</feature>
<feature type="sequence variant" id="VAR_035849" description="In a breast cancer sample; somatic mutation." evidence="9">
    <original>Q</original>
    <variation>E</variation>
    <location>
        <position position="159"/>
    </location>
</feature>
<feature type="sequence variant" id="VAR_035850" description="In a breast cancer sample; somatic mutation; dbSNP:rs112523432." evidence="9">
    <original>H</original>
    <variation>P</variation>
    <location>
        <position position="360"/>
    </location>
</feature>
<feature type="sequence variant" id="VAR_046995" description="In dbSNP:rs12239356.">
    <original>V</original>
    <variation>F</variation>
    <location>
        <position position="505"/>
    </location>
</feature>
<feature type="sequence conflict" description="In Ref. 1; CAA57993." evidence="15" ref="1">
    <original>H</original>
    <variation>D</variation>
    <location>
        <position position="392"/>
    </location>
</feature>
<feature type="helix" evidence="21">
    <location>
        <begin position="445"/>
        <end position="451"/>
    </location>
</feature>
<feature type="helix" evidence="19">
    <location>
        <begin position="896"/>
        <end position="903"/>
    </location>
</feature>
<feature type="helix" evidence="19">
    <location>
        <begin position="909"/>
        <end position="914"/>
    </location>
</feature>
<feature type="turn" evidence="19">
    <location>
        <begin position="926"/>
        <end position="929"/>
    </location>
</feature>
<feature type="helix" evidence="19">
    <location>
        <begin position="931"/>
        <end position="933"/>
    </location>
</feature>
<feature type="helix" evidence="19">
    <location>
        <begin position="946"/>
        <end position="948"/>
    </location>
</feature>
<feature type="strand" evidence="20">
    <location>
        <begin position="949"/>
        <end position="951"/>
    </location>
</feature>
<feature type="strand" evidence="20">
    <location>
        <begin position="956"/>
        <end position="958"/>
    </location>
</feature>
<feature type="strand" evidence="19">
    <location>
        <begin position="964"/>
        <end position="972"/>
    </location>
</feature>
<feature type="strand" evidence="19">
    <location>
        <begin position="975"/>
        <end position="982"/>
    </location>
</feature>
<feature type="turn" evidence="19">
    <location>
        <begin position="987"/>
        <end position="989"/>
    </location>
</feature>
<feature type="helix" evidence="19">
    <location>
        <begin position="990"/>
        <end position="999"/>
    </location>
</feature>
<feature type="strand" evidence="19">
    <location>
        <begin position="1004"/>
        <end position="1007"/>
    </location>
</feature>
<feature type="strand" evidence="19">
    <location>
        <begin position="1011"/>
        <end position="1013"/>
    </location>
</feature>
<feature type="turn" evidence="20">
    <location>
        <begin position="1029"/>
        <end position="1031"/>
    </location>
</feature>
<feature type="strand" evidence="19">
    <location>
        <begin position="1032"/>
        <end position="1035"/>
    </location>
</feature>
<feature type="strand" evidence="19">
    <location>
        <begin position="1038"/>
        <end position="1047"/>
    </location>
</feature>
<feature type="strand" evidence="19">
    <location>
        <begin position="1049"/>
        <end position="1060"/>
    </location>
</feature>
<feature type="turn" evidence="19">
    <location>
        <begin position="1061"/>
        <end position="1063"/>
    </location>
</feature>
<feature type="strand" evidence="19">
    <location>
        <begin position="1066"/>
        <end position="1074"/>
    </location>
</feature>
<feature type="strand" evidence="19">
    <location>
        <begin position="1079"/>
        <end position="1081"/>
    </location>
</feature>
<feature type="helix" evidence="19">
    <location>
        <begin position="1086"/>
        <end position="1103"/>
    </location>
</feature>
<feature type="helix" evidence="19">
    <location>
        <begin position="1105"/>
        <end position="1107"/>
    </location>
</feature>
<feature type="strand" evidence="19">
    <location>
        <begin position="1117"/>
        <end position="1125"/>
    </location>
</feature>
<feature type="helix" evidence="19">
    <location>
        <begin position="1126"/>
        <end position="1142"/>
    </location>
</feature>
<feature type="helix" evidence="19">
    <location>
        <begin position="1149"/>
        <end position="1157"/>
    </location>
</feature>
<feature type="helix" evidence="19">
    <location>
        <begin position="1167"/>
        <end position="1183"/>
    </location>
</feature>